<evidence type="ECO:0000255" key="1">
    <source>
        <dbReference type="HAMAP-Rule" id="MF_00073"/>
    </source>
</evidence>
<evidence type="ECO:0000305" key="2"/>
<proteinExistence type="inferred from homology"/>
<reference key="1">
    <citation type="journal article" date="2001" name="Genome Res.">
        <title>The complete genome sequence of the lactic acid bacterium Lactococcus lactis ssp. lactis IL1403.</title>
        <authorList>
            <person name="Bolotin A."/>
            <person name="Wincker P."/>
            <person name="Mauger S."/>
            <person name="Jaillon O."/>
            <person name="Malarme K."/>
            <person name="Weissenbach J."/>
            <person name="Ehrlich S.D."/>
            <person name="Sorokin A."/>
        </authorList>
    </citation>
    <scope>NUCLEOTIDE SEQUENCE [LARGE SCALE GENOMIC DNA]</scope>
    <source>
        <strain>IL1403</strain>
    </source>
</reference>
<gene>
    <name evidence="1" type="primary">nusB</name>
    <name type="ordered locus">LL0694</name>
    <name type="ORF">L92686</name>
</gene>
<organism>
    <name type="scientific">Lactococcus lactis subsp. lactis (strain IL1403)</name>
    <name type="common">Streptococcus lactis</name>
    <dbReference type="NCBI Taxonomy" id="272623"/>
    <lineage>
        <taxon>Bacteria</taxon>
        <taxon>Bacillati</taxon>
        <taxon>Bacillota</taxon>
        <taxon>Bacilli</taxon>
        <taxon>Lactobacillales</taxon>
        <taxon>Streptococcaceae</taxon>
        <taxon>Lactococcus</taxon>
    </lineage>
</organism>
<name>NUSB_LACLA</name>
<feature type="chain" id="PRO_0000176547" description="Transcription antitermination protein NusB">
    <location>
        <begin position="1"/>
        <end position="192"/>
    </location>
</feature>
<sequence length="192" mass="22138">MFQIELDEEPVAPKVLEFFKNLPENATAEQSLETFQKTFSFLHENVLEKYTSDLFTPSTLKEELDEQLAQAENNAQSQLSELLKNTKRFVLNYDNDRPEDLEAPEYFTQLVDGVLDKKEDLEANISKYLTKTWSFSRLTLVEQAILQVSSYEILYTETPDVVAVNEAVELSKDFSDEKSSRFINGVLTNFLK</sequence>
<keyword id="KW-1185">Reference proteome</keyword>
<keyword id="KW-0694">RNA-binding</keyword>
<keyword id="KW-0804">Transcription</keyword>
<keyword id="KW-0889">Transcription antitermination</keyword>
<keyword id="KW-0805">Transcription regulation</keyword>
<protein>
    <recommendedName>
        <fullName evidence="1">Transcription antitermination protein NusB</fullName>
    </recommendedName>
    <alternativeName>
        <fullName evidence="1">Antitermination factor NusB</fullName>
    </alternativeName>
</protein>
<dbReference type="EMBL" id="AE005176">
    <property type="protein sequence ID" value="AAK04792.1"/>
    <property type="status" value="ALT_INIT"/>
    <property type="molecule type" value="Genomic_DNA"/>
</dbReference>
<dbReference type="PIR" id="F86711">
    <property type="entry name" value="F86711"/>
</dbReference>
<dbReference type="RefSeq" id="NP_266850.1">
    <property type="nucleotide sequence ID" value="NC_002662.1"/>
</dbReference>
<dbReference type="SMR" id="Q9CHN4"/>
<dbReference type="PaxDb" id="272623-L92686"/>
<dbReference type="EnsemblBacteria" id="AAK04792">
    <property type="protein sequence ID" value="AAK04792"/>
    <property type="gene ID" value="L92686"/>
</dbReference>
<dbReference type="KEGG" id="lla:L92686"/>
<dbReference type="PATRIC" id="fig|272623.7.peg.745"/>
<dbReference type="eggNOG" id="COG0781">
    <property type="taxonomic scope" value="Bacteria"/>
</dbReference>
<dbReference type="HOGENOM" id="CLU_857344_0_0_9"/>
<dbReference type="OrthoDB" id="9811381at2"/>
<dbReference type="Proteomes" id="UP000002196">
    <property type="component" value="Chromosome"/>
</dbReference>
<dbReference type="GO" id="GO:0005829">
    <property type="term" value="C:cytosol"/>
    <property type="evidence" value="ECO:0007669"/>
    <property type="project" value="TreeGrafter"/>
</dbReference>
<dbReference type="GO" id="GO:0003723">
    <property type="term" value="F:RNA binding"/>
    <property type="evidence" value="ECO:0007669"/>
    <property type="project" value="UniProtKB-UniRule"/>
</dbReference>
<dbReference type="GO" id="GO:0006353">
    <property type="term" value="P:DNA-templated transcription termination"/>
    <property type="evidence" value="ECO:0007669"/>
    <property type="project" value="UniProtKB-UniRule"/>
</dbReference>
<dbReference type="GO" id="GO:0031564">
    <property type="term" value="P:transcription antitermination"/>
    <property type="evidence" value="ECO:0007669"/>
    <property type="project" value="UniProtKB-KW"/>
</dbReference>
<dbReference type="Gene3D" id="1.10.940.10">
    <property type="entry name" value="NusB-like"/>
    <property type="match status" value="1"/>
</dbReference>
<dbReference type="HAMAP" id="MF_00073">
    <property type="entry name" value="NusB"/>
    <property type="match status" value="1"/>
</dbReference>
<dbReference type="InterPro" id="IPR035926">
    <property type="entry name" value="NusB-like_sf"/>
</dbReference>
<dbReference type="InterPro" id="IPR011605">
    <property type="entry name" value="NusB_fam"/>
</dbReference>
<dbReference type="InterPro" id="IPR006027">
    <property type="entry name" value="NusB_RsmB_TIM44"/>
</dbReference>
<dbReference type="NCBIfam" id="TIGR01951">
    <property type="entry name" value="nusB"/>
    <property type="match status" value="1"/>
</dbReference>
<dbReference type="PANTHER" id="PTHR11078:SF3">
    <property type="entry name" value="ANTITERMINATION NUSB DOMAIN-CONTAINING PROTEIN"/>
    <property type="match status" value="1"/>
</dbReference>
<dbReference type="PANTHER" id="PTHR11078">
    <property type="entry name" value="N UTILIZATION SUBSTANCE PROTEIN B-RELATED"/>
    <property type="match status" value="1"/>
</dbReference>
<dbReference type="Pfam" id="PF01029">
    <property type="entry name" value="NusB"/>
    <property type="match status" value="1"/>
</dbReference>
<dbReference type="SUPFAM" id="SSF48013">
    <property type="entry name" value="NusB-like"/>
    <property type="match status" value="1"/>
</dbReference>
<accession>Q9CHN4</accession>
<comment type="function">
    <text evidence="1">Involved in transcription antitermination. Required for transcription of ribosomal RNA (rRNA) genes. Binds specifically to the boxA antiterminator sequence of the ribosomal RNA (rrn) operons.</text>
</comment>
<comment type="similarity">
    <text evidence="1">Belongs to the NusB family.</text>
</comment>
<comment type="sequence caution" evidence="2">
    <conflict type="erroneous initiation">
        <sequence resource="EMBL-CDS" id="AAK04792"/>
    </conflict>
</comment>